<dbReference type="EC" id="3.1.3.46"/>
<dbReference type="EMBL" id="CU329670">
    <property type="protein sequence ID" value="CAB62425.1"/>
    <property type="molecule type" value="Genomic_DNA"/>
</dbReference>
<dbReference type="PIR" id="T50254">
    <property type="entry name" value="T50254"/>
</dbReference>
<dbReference type="SMR" id="Q9URZ7"/>
<dbReference type="BioGRID" id="278291">
    <property type="interactions" value="57"/>
</dbReference>
<dbReference type="FunCoup" id="Q9URZ7">
    <property type="interactions" value="342"/>
</dbReference>
<dbReference type="STRING" id="284812.Q9URZ7"/>
<dbReference type="PaxDb" id="4896-SPAC732.02c.1"/>
<dbReference type="EnsemblFungi" id="SPAC732.02c.1">
    <property type="protein sequence ID" value="SPAC732.02c.1:pep"/>
    <property type="gene ID" value="SPAC732.02c"/>
</dbReference>
<dbReference type="KEGG" id="spo:2541800"/>
<dbReference type="PomBase" id="SPAC732.02c"/>
<dbReference type="VEuPathDB" id="FungiDB:SPAC732.02c"/>
<dbReference type="eggNOG" id="KOG0234">
    <property type="taxonomic scope" value="Eukaryota"/>
</dbReference>
<dbReference type="HOGENOM" id="CLU_006383_1_1_1"/>
<dbReference type="InParanoid" id="Q9URZ7"/>
<dbReference type="OMA" id="RWIQERC"/>
<dbReference type="PhylomeDB" id="Q9URZ7"/>
<dbReference type="Reactome" id="R-SPO-9634600">
    <property type="pathway name" value="Regulation of glycolysis by fructose 2,6-bisphosphate metabolism"/>
</dbReference>
<dbReference type="PRO" id="PR:Q9URZ7"/>
<dbReference type="Proteomes" id="UP000002485">
    <property type="component" value="Chromosome I"/>
</dbReference>
<dbReference type="GO" id="GO:0005829">
    <property type="term" value="C:cytosol"/>
    <property type="evidence" value="ECO:0000318"/>
    <property type="project" value="GO_Central"/>
</dbReference>
<dbReference type="GO" id="GO:0003873">
    <property type="term" value="F:6-phosphofructo-2-kinase activity"/>
    <property type="evidence" value="ECO:0000318"/>
    <property type="project" value="GO_Central"/>
</dbReference>
<dbReference type="GO" id="GO:0005524">
    <property type="term" value="F:ATP binding"/>
    <property type="evidence" value="ECO:0007669"/>
    <property type="project" value="UniProtKB-KW"/>
</dbReference>
<dbReference type="GO" id="GO:0004331">
    <property type="term" value="F:fructose-2,6-bisphosphate 2-phosphatase activity"/>
    <property type="evidence" value="ECO:0000318"/>
    <property type="project" value="GO_Central"/>
</dbReference>
<dbReference type="GO" id="GO:0006003">
    <property type="term" value="P:fructose 2,6-bisphosphate metabolic process"/>
    <property type="evidence" value="ECO:0000318"/>
    <property type="project" value="GO_Central"/>
</dbReference>
<dbReference type="GO" id="GO:0006000">
    <property type="term" value="P:fructose metabolic process"/>
    <property type="evidence" value="ECO:0007669"/>
    <property type="project" value="InterPro"/>
</dbReference>
<dbReference type="CDD" id="cd07067">
    <property type="entry name" value="HP_PGM_like"/>
    <property type="match status" value="1"/>
</dbReference>
<dbReference type="FunFam" id="3.40.50.1240:FF:000005">
    <property type="entry name" value="GpmB, Fructose-2,6-bisphosphatase"/>
    <property type="match status" value="1"/>
</dbReference>
<dbReference type="Gene3D" id="3.40.50.300">
    <property type="entry name" value="P-loop containing nucleotide triphosphate hydrolases"/>
    <property type="match status" value="1"/>
</dbReference>
<dbReference type="Gene3D" id="3.40.50.1240">
    <property type="entry name" value="Phosphoglycerate mutase-like"/>
    <property type="match status" value="1"/>
</dbReference>
<dbReference type="InterPro" id="IPR003094">
    <property type="entry name" value="6Pfruct_kin"/>
</dbReference>
<dbReference type="InterPro" id="IPR013079">
    <property type="entry name" value="6Phosfructo_kin"/>
</dbReference>
<dbReference type="InterPro" id="IPR013078">
    <property type="entry name" value="His_Pase_superF_clade-1"/>
</dbReference>
<dbReference type="InterPro" id="IPR029033">
    <property type="entry name" value="His_PPase_superfam"/>
</dbReference>
<dbReference type="InterPro" id="IPR027417">
    <property type="entry name" value="P-loop_NTPase"/>
</dbReference>
<dbReference type="InterPro" id="IPR001345">
    <property type="entry name" value="PG/BPGM_mutase_AS"/>
</dbReference>
<dbReference type="PANTHER" id="PTHR10606:SF44">
    <property type="entry name" value="6-PHOSPHOFRUCTO 2-KINASE_FRUCTOSE 2,6-BISPHOSPHATASE LONG FORM"/>
    <property type="match status" value="1"/>
</dbReference>
<dbReference type="PANTHER" id="PTHR10606">
    <property type="entry name" value="6-PHOSPHOFRUCTO-2-KINASE/FRUCTOSE-2,6-BISPHOSPHATASE"/>
    <property type="match status" value="1"/>
</dbReference>
<dbReference type="Pfam" id="PF01591">
    <property type="entry name" value="6PF2K"/>
    <property type="match status" value="1"/>
</dbReference>
<dbReference type="Pfam" id="PF00300">
    <property type="entry name" value="His_Phos_1"/>
    <property type="match status" value="1"/>
</dbReference>
<dbReference type="PIRSF" id="PIRSF000709">
    <property type="entry name" value="6PFK_2-Ptase"/>
    <property type="match status" value="1"/>
</dbReference>
<dbReference type="PRINTS" id="PR00991">
    <property type="entry name" value="6PFRUCTKNASE"/>
</dbReference>
<dbReference type="SMART" id="SM00855">
    <property type="entry name" value="PGAM"/>
    <property type="match status" value="1"/>
</dbReference>
<dbReference type="SUPFAM" id="SSF52540">
    <property type="entry name" value="P-loop containing nucleoside triphosphate hydrolases"/>
    <property type="match status" value="1"/>
</dbReference>
<dbReference type="SUPFAM" id="SSF53254">
    <property type="entry name" value="Phosphoglycerate mutase-like"/>
    <property type="match status" value="1"/>
</dbReference>
<dbReference type="PROSITE" id="PS00175">
    <property type="entry name" value="PG_MUTASE"/>
    <property type="match status" value="1"/>
</dbReference>
<evidence type="ECO:0000250" key="1"/>
<evidence type="ECO:0000250" key="2">
    <source>
        <dbReference type="UniProtKB" id="P07953"/>
    </source>
</evidence>
<evidence type="ECO:0000250" key="3">
    <source>
        <dbReference type="UniProtKB" id="Q16875"/>
    </source>
</evidence>
<evidence type="ECO:0000255" key="4"/>
<evidence type="ECO:0000305" key="5"/>
<protein>
    <recommendedName>
        <fullName>Probable fructose-2,6-bisphosphatase C732.02c</fullName>
        <ecNumber>3.1.3.46</ecNumber>
    </recommendedName>
</protein>
<sequence>MKDIEGLLGLCVCFVGLPASGKTSSAMKLSRYLTWMSVSTHLYDTKEIDNSLSENSNSDSENLAKTLSPIFDNLESVFKKGTDVAILDFNQCTLKFRKSIVELAKARNMLLMFVEVVCTNQKIIDENITDMCQHSPYFKSFPFEESKNKILDSIHEYEKHYTPLSEAEECTFVRIVDFGAELIVHKLENYLESRIVYYLSNLRTRRRSIWLSRHGESQFNVEGKIGGDSSLSPQGLKYAALLPEYVAKFSIGEKGLTVWTSSMARTIQTARHLNCQKLEWRALDELDAGTCDGFTYDYIEQNFPHEAELRNNDKFHYRYRGGESYMDVVRRLEPIIMELERQGDVFIICHQAILRCIYGYYHNLSLEELPFINVPLHTIIKLTPMTYETIEERVTVPISAVSTQRGKH</sequence>
<comment type="function">
    <text evidence="1">This is predominantly if not solely a fructose-2,6-bisphosphatase.</text>
</comment>
<comment type="catalytic activity">
    <reaction>
        <text>beta-D-fructose 2,6-bisphosphate + H2O = beta-D-fructose 6-phosphate + phosphate</text>
        <dbReference type="Rhea" id="RHEA:17289"/>
        <dbReference type="ChEBI" id="CHEBI:15377"/>
        <dbReference type="ChEBI" id="CHEBI:43474"/>
        <dbReference type="ChEBI" id="CHEBI:57634"/>
        <dbReference type="ChEBI" id="CHEBI:58579"/>
        <dbReference type="EC" id="3.1.3.46"/>
    </reaction>
</comment>
<comment type="similarity">
    <text evidence="5">In the C-terminal section; belongs to the phosphoglycerate mutase family.</text>
</comment>
<organism>
    <name type="scientific">Schizosaccharomyces pombe (strain 972 / ATCC 24843)</name>
    <name type="common">Fission yeast</name>
    <dbReference type="NCBI Taxonomy" id="284812"/>
    <lineage>
        <taxon>Eukaryota</taxon>
        <taxon>Fungi</taxon>
        <taxon>Dikarya</taxon>
        <taxon>Ascomycota</taxon>
        <taxon>Taphrinomycotina</taxon>
        <taxon>Schizosaccharomycetes</taxon>
        <taxon>Schizosaccharomycetales</taxon>
        <taxon>Schizosaccharomycetaceae</taxon>
        <taxon>Schizosaccharomyces</taxon>
    </lineage>
</organism>
<name>YK72_SCHPO</name>
<reference key="1">
    <citation type="journal article" date="2002" name="Nature">
        <title>The genome sequence of Schizosaccharomyces pombe.</title>
        <authorList>
            <person name="Wood V."/>
            <person name="Gwilliam R."/>
            <person name="Rajandream M.A."/>
            <person name="Lyne M.H."/>
            <person name="Lyne R."/>
            <person name="Stewart A."/>
            <person name="Sgouros J.G."/>
            <person name="Peat N."/>
            <person name="Hayles J."/>
            <person name="Baker S.G."/>
            <person name="Basham D."/>
            <person name="Bowman S."/>
            <person name="Brooks K."/>
            <person name="Brown D."/>
            <person name="Brown S."/>
            <person name="Chillingworth T."/>
            <person name="Churcher C.M."/>
            <person name="Collins M."/>
            <person name="Connor R."/>
            <person name="Cronin A."/>
            <person name="Davis P."/>
            <person name="Feltwell T."/>
            <person name="Fraser A."/>
            <person name="Gentles S."/>
            <person name="Goble A."/>
            <person name="Hamlin N."/>
            <person name="Harris D.E."/>
            <person name="Hidalgo J."/>
            <person name="Hodgson G."/>
            <person name="Holroyd S."/>
            <person name="Hornsby T."/>
            <person name="Howarth S."/>
            <person name="Huckle E.J."/>
            <person name="Hunt S."/>
            <person name="Jagels K."/>
            <person name="James K.D."/>
            <person name="Jones L."/>
            <person name="Jones M."/>
            <person name="Leather S."/>
            <person name="McDonald S."/>
            <person name="McLean J."/>
            <person name="Mooney P."/>
            <person name="Moule S."/>
            <person name="Mungall K.L."/>
            <person name="Murphy L.D."/>
            <person name="Niblett D."/>
            <person name="Odell C."/>
            <person name="Oliver K."/>
            <person name="O'Neil S."/>
            <person name="Pearson D."/>
            <person name="Quail M.A."/>
            <person name="Rabbinowitsch E."/>
            <person name="Rutherford K.M."/>
            <person name="Rutter S."/>
            <person name="Saunders D."/>
            <person name="Seeger K."/>
            <person name="Sharp S."/>
            <person name="Skelton J."/>
            <person name="Simmonds M.N."/>
            <person name="Squares R."/>
            <person name="Squares S."/>
            <person name="Stevens K."/>
            <person name="Taylor K."/>
            <person name="Taylor R.G."/>
            <person name="Tivey A."/>
            <person name="Walsh S.V."/>
            <person name="Warren T."/>
            <person name="Whitehead S."/>
            <person name="Woodward J.R."/>
            <person name="Volckaert G."/>
            <person name="Aert R."/>
            <person name="Robben J."/>
            <person name="Grymonprez B."/>
            <person name="Weltjens I."/>
            <person name="Vanstreels E."/>
            <person name="Rieger M."/>
            <person name="Schaefer M."/>
            <person name="Mueller-Auer S."/>
            <person name="Gabel C."/>
            <person name="Fuchs M."/>
            <person name="Duesterhoeft A."/>
            <person name="Fritzc C."/>
            <person name="Holzer E."/>
            <person name="Moestl D."/>
            <person name="Hilbert H."/>
            <person name="Borzym K."/>
            <person name="Langer I."/>
            <person name="Beck A."/>
            <person name="Lehrach H."/>
            <person name="Reinhardt R."/>
            <person name="Pohl T.M."/>
            <person name="Eger P."/>
            <person name="Zimmermann W."/>
            <person name="Wedler H."/>
            <person name="Wambutt R."/>
            <person name="Purnelle B."/>
            <person name="Goffeau A."/>
            <person name="Cadieu E."/>
            <person name="Dreano S."/>
            <person name="Gloux S."/>
            <person name="Lelaure V."/>
            <person name="Mottier S."/>
            <person name="Galibert F."/>
            <person name="Aves S.J."/>
            <person name="Xiang Z."/>
            <person name="Hunt C."/>
            <person name="Moore K."/>
            <person name="Hurst S.M."/>
            <person name="Lucas M."/>
            <person name="Rochet M."/>
            <person name="Gaillardin C."/>
            <person name="Tallada V.A."/>
            <person name="Garzon A."/>
            <person name="Thode G."/>
            <person name="Daga R.R."/>
            <person name="Cruzado L."/>
            <person name="Jimenez J."/>
            <person name="Sanchez M."/>
            <person name="del Rey F."/>
            <person name="Benito J."/>
            <person name="Dominguez A."/>
            <person name="Revuelta J.L."/>
            <person name="Moreno S."/>
            <person name="Armstrong J."/>
            <person name="Forsburg S.L."/>
            <person name="Cerutti L."/>
            <person name="Lowe T."/>
            <person name="McCombie W.R."/>
            <person name="Paulsen I."/>
            <person name="Potashkin J."/>
            <person name="Shpakovski G.V."/>
            <person name="Ussery D."/>
            <person name="Barrell B.G."/>
            <person name="Nurse P."/>
        </authorList>
    </citation>
    <scope>NUCLEOTIDE SEQUENCE [LARGE SCALE GENOMIC DNA]</scope>
    <source>
        <strain>972 / ATCC 24843</strain>
    </source>
</reference>
<proteinExistence type="inferred from homology"/>
<gene>
    <name type="ORF">SPAC732.02c</name>
</gene>
<keyword id="KW-0067">ATP-binding</keyword>
<keyword id="KW-0378">Hydrolase</keyword>
<keyword id="KW-0418">Kinase</keyword>
<keyword id="KW-0547">Nucleotide-binding</keyword>
<keyword id="KW-1185">Reference proteome</keyword>
<keyword id="KW-0808">Transferase</keyword>
<accession>Q9URZ7</accession>
<feature type="chain" id="PRO_0000318495" description="Probable fructose-2,6-bisphosphatase C732.02c">
    <location>
        <begin position="1"/>
        <end position="408"/>
    </location>
</feature>
<feature type="active site" evidence="4">
    <location>
        <position position="88"/>
    </location>
</feature>
<feature type="active site" description="Tele-phosphohistidine intermediate" evidence="3">
    <location>
        <position position="214"/>
    </location>
</feature>
<feature type="active site" description="Proton donor/acceptor" evidence="3">
    <location>
        <position position="285"/>
    </location>
</feature>
<feature type="binding site" evidence="3">
    <location>
        <begin position="16"/>
        <end position="24"/>
    </location>
    <ligand>
        <name>ATP</name>
        <dbReference type="ChEBI" id="CHEBI:30616"/>
    </ligand>
</feature>
<feature type="binding site" evidence="3">
    <location>
        <begin position="127"/>
        <end position="132"/>
    </location>
    <ligand>
        <name>ATP</name>
        <dbReference type="ChEBI" id="CHEBI:30616"/>
    </ligand>
</feature>
<feature type="binding site" evidence="3">
    <location>
        <position position="157"/>
    </location>
    <ligand>
        <name>beta-D-fructose 6-phosphate</name>
        <dbReference type="ChEBI" id="CHEBI:57634"/>
    </ligand>
</feature>
<feature type="binding site" evidence="3">
    <location>
        <position position="213"/>
    </location>
    <ligand>
        <name>beta-D-fructose 2,6-bisphosphate</name>
        <dbReference type="ChEBI" id="CHEBI:58579"/>
    </ligand>
</feature>
<feature type="binding site" evidence="3">
    <location>
        <position position="220"/>
    </location>
    <ligand>
        <name>beta-D-fructose 2,6-bisphosphate</name>
        <dbReference type="ChEBI" id="CHEBI:58579"/>
    </ligand>
</feature>
<feature type="binding site" evidence="3">
    <location>
        <position position="226"/>
    </location>
    <ligand>
        <name>beta-D-fructose 2,6-bisphosphate</name>
        <dbReference type="ChEBI" id="CHEBI:58579"/>
    </ligand>
</feature>
<feature type="binding site" evidence="3">
    <location>
        <position position="296"/>
    </location>
    <ligand>
        <name>beta-D-fructose 2,6-bisphosphate</name>
        <dbReference type="ChEBI" id="CHEBI:58579"/>
    </ligand>
</feature>
<feature type="binding site" evidence="2">
    <location>
        <begin position="307"/>
        <end position="310"/>
    </location>
    <ligand>
        <name>ATP</name>
        <dbReference type="ChEBI" id="CHEBI:30616"/>
    </ligand>
</feature>
<feature type="binding site" evidence="3">
    <location>
        <position position="310"/>
    </location>
    <ligand>
        <name>beta-D-fructose 2,6-bisphosphate</name>
        <dbReference type="ChEBI" id="CHEBI:58579"/>
    </ligand>
</feature>
<feature type="binding site" evidence="3">
    <location>
        <position position="314"/>
    </location>
    <ligand>
        <name>beta-D-fructose 2,6-bisphosphate</name>
        <dbReference type="ChEBI" id="CHEBI:58579"/>
    </ligand>
</feature>
<feature type="binding site" evidence="3">
    <location>
        <position position="325"/>
    </location>
    <ligand>
        <name>beta-D-fructose 2,6-bisphosphate</name>
        <dbReference type="ChEBI" id="CHEBI:58579"/>
    </ligand>
</feature>
<feature type="binding site" evidence="2">
    <location>
        <begin position="351"/>
        <end position="355"/>
    </location>
    <ligand>
        <name>ATP</name>
        <dbReference type="ChEBI" id="CHEBI:30616"/>
    </ligand>
</feature>
<feature type="binding site" evidence="3">
    <location>
        <position position="351"/>
    </location>
    <ligand>
        <name>beta-D-fructose 2,6-bisphosphate</name>
        <dbReference type="ChEBI" id="CHEBI:58579"/>
    </ligand>
</feature>
<feature type="binding site" evidence="2">
    <location>
        <position position="355"/>
    </location>
    <ligand>
        <name>beta-D-fructose 2,6-bisphosphate</name>
        <dbReference type="ChEBI" id="CHEBI:58579"/>
    </ligand>
</feature>
<feature type="binding site" evidence="3">
    <location>
        <position position="387"/>
    </location>
    <ligand>
        <name>ATP</name>
        <dbReference type="ChEBI" id="CHEBI:30616"/>
    </ligand>
</feature>
<feature type="site" description="Transition state stabilizer" evidence="3">
    <location>
        <position position="213"/>
    </location>
</feature>
<feature type="site" description="Transition state stabilizer" evidence="3">
    <location>
        <position position="220"/>
    </location>
</feature>
<feature type="site" description="Transition state stabilizer" evidence="3">
    <location>
        <position position="350"/>
    </location>
</feature>